<accession>O29972</accession>
<protein>
    <recommendedName>
        <fullName>Uncharacterized protein AF_0267</fullName>
    </recommendedName>
</protein>
<feature type="chain" id="PRO_0000127857" description="Uncharacterized protein AF_0267">
    <location>
        <begin position="1"/>
        <end position="597"/>
    </location>
</feature>
<feature type="transmembrane region" description="Helical" evidence="1">
    <location>
        <begin position="4"/>
        <end position="23"/>
    </location>
</feature>
<feature type="transmembrane region" description="Helical" evidence="1">
    <location>
        <begin position="209"/>
        <end position="231"/>
    </location>
</feature>
<sequence>MKYLLLALLLCLAVGTAGGFKIVKTCEKDPRGYIADLGNGKYLMHLEGSPYEMGYQHGCLKGAEVQSMTKEFVKSVLAGYDIPEDLIPGLLKLGKEVAKGNEKYVPSEFREEMRGIADGARDAGYDVDYDDVLLLNMGFDVILSIAYPIATPIVAWQDKKGVACDGFVAMDDATSDGRVLMGRSFMFNPEVFHEVALLIEQYPDRGHRFVSVSAPGFVGVTAAMSSAGIAIGMDMVPAMDTKPFVSGMGCLLTARQVVQYADELSDAVNMVKGSKRGVPWLYIVGDGKGREKGGAVLEVSADKFAVRYMDYRYPEWAESLDFPKQIEDKDDLVVVANHYIVPEMYSTISYAVKDSLWRYETLTGLILDSYGSIDVEKGKELIDYLHPPNYGYYGEDENVPVAATRTLFDLSNLELWSLYGMYTDPWAHWELTTEYQPAGLDKAWKDTEGDVAGPSWKPINYGAPIIDKEKMLDSADLQKLSEADGNYVEQCVKAYAGNPNYATIHLRFNVQSSANIMLTVADQNDGLEIYAWNYNTNDWQKVYDRIYPSGFTTLRLSLGSEFVNNRKADLVLISEAKWKFGMIYDKACVAVDAAAVT</sequence>
<name>Y267_ARCFU</name>
<keyword id="KW-1003">Cell membrane</keyword>
<keyword id="KW-0472">Membrane</keyword>
<keyword id="KW-1185">Reference proteome</keyword>
<keyword id="KW-0812">Transmembrane</keyword>
<keyword id="KW-1133">Transmembrane helix</keyword>
<dbReference type="EMBL" id="AE000782">
    <property type="protein sequence ID" value="AAB90971.1"/>
    <property type="molecule type" value="Genomic_DNA"/>
</dbReference>
<dbReference type="PIR" id="C69283">
    <property type="entry name" value="C69283"/>
</dbReference>
<dbReference type="RefSeq" id="WP_010877778.1">
    <property type="nucleotide sequence ID" value="NC_000917.1"/>
</dbReference>
<dbReference type="SMR" id="O29972"/>
<dbReference type="STRING" id="224325.AF_0267"/>
<dbReference type="PaxDb" id="224325-AF_0267"/>
<dbReference type="EnsemblBacteria" id="AAB90971">
    <property type="protein sequence ID" value="AAB90971"/>
    <property type="gene ID" value="AF_0267"/>
</dbReference>
<dbReference type="KEGG" id="afu:AF_0267"/>
<dbReference type="eggNOG" id="arCOG06935">
    <property type="taxonomic scope" value="Archaea"/>
</dbReference>
<dbReference type="HOGENOM" id="CLU_456816_0_0_2"/>
<dbReference type="OrthoDB" id="133619at2157"/>
<dbReference type="Proteomes" id="UP000002199">
    <property type="component" value="Chromosome"/>
</dbReference>
<dbReference type="GO" id="GO:0005886">
    <property type="term" value="C:plasma membrane"/>
    <property type="evidence" value="ECO:0007669"/>
    <property type="project" value="UniProtKB-SubCell"/>
</dbReference>
<dbReference type="Gene3D" id="3.60.60.10">
    <property type="entry name" value="Penicillin V Acylase, Chain A"/>
    <property type="match status" value="1"/>
</dbReference>
<dbReference type="InterPro" id="IPR047794">
    <property type="entry name" value="C45_proenzyme-like"/>
</dbReference>
<dbReference type="InterPro" id="IPR047803">
    <property type="entry name" value="DCD1A/B-like"/>
</dbReference>
<dbReference type="InterPro" id="IPR005079">
    <property type="entry name" value="Peptidase_C45_hydrolase"/>
</dbReference>
<dbReference type="NCBIfam" id="NF040521">
    <property type="entry name" value="C45_proenzyme"/>
    <property type="match status" value="1"/>
</dbReference>
<dbReference type="PANTHER" id="PTHR35190">
    <property type="entry name" value="PROTEIN DCD1B"/>
    <property type="match status" value="1"/>
</dbReference>
<dbReference type="PANTHER" id="PTHR35190:SF2">
    <property type="entry name" value="PROTEIN DCD1B"/>
    <property type="match status" value="1"/>
</dbReference>
<dbReference type="Pfam" id="PF03417">
    <property type="entry name" value="AAT"/>
    <property type="match status" value="1"/>
</dbReference>
<proteinExistence type="predicted"/>
<reference key="1">
    <citation type="journal article" date="1997" name="Nature">
        <title>The complete genome sequence of the hyperthermophilic, sulphate-reducing archaeon Archaeoglobus fulgidus.</title>
        <authorList>
            <person name="Klenk H.-P."/>
            <person name="Clayton R.A."/>
            <person name="Tomb J.-F."/>
            <person name="White O."/>
            <person name="Nelson K.E."/>
            <person name="Ketchum K.A."/>
            <person name="Dodson R.J."/>
            <person name="Gwinn M.L."/>
            <person name="Hickey E.K."/>
            <person name="Peterson J.D."/>
            <person name="Richardson D.L."/>
            <person name="Kerlavage A.R."/>
            <person name="Graham D.E."/>
            <person name="Kyrpides N.C."/>
            <person name="Fleischmann R.D."/>
            <person name="Quackenbush J."/>
            <person name="Lee N.H."/>
            <person name="Sutton G.G."/>
            <person name="Gill S.R."/>
            <person name="Kirkness E.F."/>
            <person name="Dougherty B.A."/>
            <person name="McKenney K."/>
            <person name="Adams M.D."/>
            <person name="Loftus B.J."/>
            <person name="Peterson S.N."/>
            <person name="Reich C.I."/>
            <person name="McNeil L.K."/>
            <person name="Badger J.H."/>
            <person name="Glodek A."/>
            <person name="Zhou L."/>
            <person name="Overbeek R."/>
            <person name="Gocayne J.D."/>
            <person name="Weidman J.F."/>
            <person name="McDonald L.A."/>
            <person name="Utterback T.R."/>
            <person name="Cotton M.D."/>
            <person name="Spriggs T."/>
            <person name="Artiach P."/>
            <person name="Kaine B.P."/>
            <person name="Sykes S.M."/>
            <person name="Sadow P.W."/>
            <person name="D'Andrea K.P."/>
            <person name="Bowman C."/>
            <person name="Fujii C."/>
            <person name="Garland S.A."/>
            <person name="Mason T.M."/>
            <person name="Olsen G.J."/>
            <person name="Fraser C.M."/>
            <person name="Smith H.O."/>
            <person name="Woese C.R."/>
            <person name="Venter J.C."/>
        </authorList>
    </citation>
    <scope>NUCLEOTIDE SEQUENCE [LARGE SCALE GENOMIC DNA]</scope>
    <source>
        <strain>ATCC 49558 / DSM 4304 / JCM 9628 / NBRC 100126 / VC-16</strain>
    </source>
</reference>
<comment type="subcellular location">
    <subcellularLocation>
        <location evidence="2">Cell membrane</location>
        <topology evidence="2">Multi-pass membrane protein</topology>
    </subcellularLocation>
</comment>
<organism>
    <name type="scientific">Archaeoglobus fulgidus (strain ATCC 49558 / DSM 4304 / JCM 9628 / NBRC 100126 / VC-16)</name>
    <dbReference type="NCBI Taxonomy" id="224325"/>
    <lineage>
        <taxon>Archaea</taxon>
        <taxon>Methanobacteriati</taxon>
        <taxon>Methanobacteriota</taxon>
        <taxon>Archaeoglobi</taxon>
        <taxon>Archaeoglobales</taxon>
        <taxon>Archaeoglobaceae</taxon>
        <taxon>Archaeoglobus</taxon>
    </lineage>
</organism>
<evidence type="ECO:0000255" key="1"/>
<evidence type="ECO:0000305" key="2"/>
<gene>
    <name type="ordered locus">AF_0267</name>
</gene>